<name>HDT1_ARATH</name>
<comment type="function">
    <text evidence="4 5 7 8">Probably mediates the deacetylation of lysine residues on the N-terminal part of the core histones (H2A, H2B, H3 and H4). Histone deacetylation gives a tag for epigenetic repression and plays an important role in transcriptional regulation, cell cycle progression and developmental events. Required for histone H3 'Lys-9' deacetylation. Involved in rRNA gene silencing in nucleolar dominance. Seems to be implicated in the regulation of genes involved in seeds development.</text>
</comment>
<comment type="subunit">
    <text evidence="9 10">Interacts with DNMT2 (PubMed:20331964). Interacts with DEK3 (PubMed:25387881).</text>
</comment>
<comment type="subcellular location">
    <subcellularLocation>
        <location evidence="6 7 8">Nucleus</location>
        <location evidence="6 7 8">Nucleolus</location>
    </subcellularLocation>
</comment>
<comment type="alternative products">
    <event type="alternative splicing"/>
    <isoform>
        <id>Q9FVE6-1</id>
        <name>1</name>
        <sequence type="displayed"/>
    </isoform>
    <text>A number of isoforms are produced. According to EST sequences.</text>
</comment>
<comment type="tissue specificity">
    <text evidence="4 8">Expressed in leaves, roots, stems, young plantlets, flowers and siliques. Highest levels in ovules, embryos, shoot apical meristems and first leaves. Also expressed in somatic embryos.</text>
</comment>
<comment type="miscellaneous">
    <text>Loss-of-function mutant (antisense inhibition) induces increased methylation of histone H3 'Lys-4' and hypomethylation of DNA at rDNA repeats.</text>
</comment>
<comment type="similarity">
    <text evidence="14">Belongs to the histone deacetylase HD2 family.</text>
</comment>
<comment type="sequence caution" evidence="14">
    <conflict type="erroneous gene model prediction">
        <sequence resource="EMBL-CDS" id="AAB70032"/>
    </conflict>
</comment>
<protein>
    <recommendedName>
        <fullName evidence="12">Histone deacetylase HDT1</fullName>
    </recommendedName>
    <alternativeName>
        <fullName evidence="12">HD-tuins protein 1</fullName>
    </alternativeName>
    <alternativeName>
        <fullName evidence="11 13">Histone deacetylase 2a</fullName>
        <shortName evidence="13">AtHD2A</shortName>
    </alternativeName>
</protein>
<accession>Q9FVE6</accession>
<accession>O22238</accession>
<keyword id="KW-0002">3D-structure</keyword>
<keyword id="KW-0007">Acetylation</keyword>
<keyword id="KW-0025">Alternative splicing</keyword>
<keyword id="KW-0156">Chromatin regulator</keyword>
<keyword id="KW-0217">Developmental protein</keyword>
<keyword id="KW-0378">Hydrolase</keyword>
<keyword id="KW-0479">Metal-binding</keyword>
<keyword id="KW-0539">Nucleus</keyword>
<keyword id="KW-0597">Phosphoprotein</keyword>
<keyword id="KW-1185">Reference proteome</keyword>
<keyword id="KW-0678">Repressor</keyword>
<keyword id="KW-0804">Transcription</keyword>
<keyword id="KW-0805">Transcription regulation</keyword>
<keyword id="KW-0862">Zinc</keyword>
<keyword id="KW-0863">Zinc-finger</keyword>
<evidence type="ECO:0000250" key="1">
    <source>
        <dbReference type="UniProtKB" id="Q56WH4"/>
    </source>
</evidence>
<evidence type="ECO:0000255" key="2">
    <source>
        <dbReference type="PROSITE-ProRule" id="PRU00042"/>
    </source>
</evidence>
<evidence type="ECO:0000256" key="3">
    <source>
        <dbReference type="SAM" id="MobiDB-lite"/>
    </source>
</evidence>
<evidence type="ECO:0000269" key="4">
    <source>
    </source>
</evidence>
<evidence type="ECO:0000269" key="5">
    <source>
    </source>
</evidence>
<evidence type="ECO:0000269" key="6">
    <source>
    </source>
</evidence>
<evidence type="ECO:0000269" key="7">
    <source>
    </source>
</evidence>
<evidence type="ECO:0000269" key="8">
    <source>
    </source>
</evidence>
<evidence type="ECO:0000269" key="9">
    <source>
    </source>
</evidence>
<evidence type="ECO:0000269" key="10">
    <source>
    </source>
</evidence>
<evidence type="ECO:0000303" key="11">
    <source>
    </source>
</evidence>
<evidence type="ECO:0000303" key="12">
    <source>
    </source>
</evidence>
<evidence type="ECO:0000303" key="13">
    <source>
    </source>
</evidence>
<evidence type="ECO:0000305" key="14"/>
<evidence type="ECO:0000312" key="15">
    <source>
        <dbReference type="Araport" id="AT3G44750"/>
    </source>
</evidence>
<evidence type="ECO:0000312" key="16">
    <source>
        <dbReference type="EMBL" id="AAB70032.1"/>
    </source>
</evidence>
<evidence type="ECO:0007744" key="17">
    <source>
    </source>
</evidence>
<evidence type="ECO:0007829" key="18">
    <source>
        <dbReference type="PDB" id="7VRR"/>
    </source>
</evidence>
<organism>
    <name type="scientific">Arabidopsis thaliana</name>
    <name type="common">Mouse-ear cress</name>
    <dbReference type="NCBI Taxonomy" id="3702"/>
    <lineage>
        <taxon>Eukaryota</taxon>
        <taxon>Viridiplantae</taxon>
        <taxon>Streptophyta</taxon>
        <taxon>Embryophyta</taxon>
        <taxon>Tracheophyta</taxon>
        <taxon>Spermatophyta</taxon>
        <taxon>Magnoliopsida</taxon>
        <taxon>eudicotyledons</taxon>
        <taxon>Gunneridae</taxon>
        <taxon>Pentapetalae</taxon>
        <taxon>rosids</taxon>
        <taxon>malvids</taxon>
        <taxon>Brassicales</taxon>
        <taxon>Brassicaceae</taxon>
        <taxon>Camelineae</taxon>
        <taxon>Arabidopsis</taxon>
    </lineage>
</organism>
<feature type="chain" id="PRO_0000195204" description="Histone deacetylase HDT1">
    <location>
        <begin position="1"/>
        <end position="245"/>
    </location>
</feature>
<feature type="zinc finger region" description="C2H2-type" evidence="2">
    <location>
        <begin position="218"/>
        <end position="241"/>
    </location>
</feature>
<feature type="region of interest" description="Required to repress transcription" evidence="8">
    <location>
        <begin position="2"/>
        <end position="5"/>
    </location>
</feature>
<feature type="region of interest" description="Disordered" evidence="3">
    <location>
        <begin position="99"/>
        <end position="245"/>
    </location>
</feature>
<feature type="region of interest" description="Required to repress transcription">
    <location>
        <begin position="101"/>
        <end position="162"/>
    </location>
</feature>
<feature type="compositionally biased region" description="Acidic residues" evidence="3">
    <location>
        <begin position="103"/>
        <end position="113"/>
    </location>
</feature>
<feature type="compositionally biased region" description="Low complexity" evidence="3">
    <location>
        <begin position="114"/>
        <end position="124"/>
    </location>
</feature>
<feature type="compositionally biased region" description="Acidic residues" evidence="3">
    <location>
        <begin position="137"/>
        <end position="162"/>
    </location>
</feature>
<feature type="compositionally biased region" description="Low complexity" evidence="3">
    <location>
        <begin position="178"/>
        <end position="195"/>
    </location>
</feature>
<feature type="compositionally biased region" description="Polar residues" evidence="3">
    <location>
        <begin position="208"/>
        <end position="234"/>
    </location>
</feature>
<feature type="modified residue" description="N-acetylmethionine" evidence="17">
    <location>
        <position position="1"/>
    </location>
</feature>
<feature type="modified residue" description="Phosphoserine" evidence="1">
    <location>
        <position position="211"/>
    </location>
</feature>
<feature type="mutagenesis site" description="Loss of transcriptional repression activity." evidence="8">
    <location>
        <begin position="2"/>
        <end position="5"/>
    </location>
</feature>
<feature type="mutagenesis site" description="Decrease of transcriptional repression activity." evidence="8">
    <original>H</original>
    <variation>A</variation>
    <location>
        <position position="25"/>
    </location>
</feature>
<feature type="mutagenesis site" description="No effect on transcriptional repression activity." evidence="8">
    <original>D</original>
    <variation>A</variation>
    <location>
        <position position="69"/>
    </location>
</feature>
<feature type="strand" evidence="18">
    <location>
        <begin position="2"/>
        <end position="9"/>
    </location>
</feature>
<feature type="strand" evidence="18">
    <location>
        <begin position="14"/>
        <end position="16"/>
    </location>
</feature>
<feature type="strand" evidence="18">
    <location>
        <begin position="22"/>
        <end position="31"/>
    </location>
</feature>
<feature type="strand" evidence="18">
    <location>
        <begin position="41"/>
        <end position="48"/>
    </location>
</feature>
<feature type="strand" evidence="18">
    <location>
        <begin position="51"/>
        <end position="59"/>
    </location>
</feature>
<feature type="turn" evidence="18">
    <location>
        <begin position="60"/>
        <end position="62"/>
    </location>
</feature>
<feature type="strand" evidence="18">
    <location>
        <begin position="63"/>
        <end position="74"/>
    </location>
</feature>
<feature type="strand" evidence="18">
    <location>
        <begin position="76"/>
        <end position="79"/>
    </location>
</feature>
<feature type="strand" evidence="18">
    <location>
        <begin position="83"/>
        <end position="95"/>
    </location>
</feature>
<sequence>MEFWGIEVKSGKPVTVTPEEGILIHVSQASLGECKNKKGEFVPLHVKVGNQNLVLGTLSTENIPQLFCDLVFDKEFELSHTWGKGSVYFVGYKTPNIEPQGYSEEEEEEEEEVPAGNAAKAVAKPKAKPAEVKPAVDDEEDESDSDGMDEDDSDGEDSEEEEPTPKKPASSKKRANETTPKAPVSAKKAKVAVTPQKTDEKKKGGKAANQSPKSASQVSCGSCKKTFNSGNALESHNKAKHAAAK</sequence>
<proteinExistence type="evidence at protein level"/>
<dbReference type="EMBL" id="AF195545">
    <property type="protein sequence ID" value="AAG28472.1"/>
    <property type="molecule type" value="mRNA"/>
</dbReference>
<dbReference type="EMBL" id="AC002534">
    <property type="protein sequence ID" value="AAB70032.1"/>
    <property type="status" value="ALT_SEQ"/>
    <property type="molecule type" value="Genomic_DNA"/>
</dbReference>
<dbReference type="EMBL" id="CP002686">
    <property type="protein sequence ID" value="AEE77944.1"/>
    <property type="molecule type" value="Genomic_DNA"/>
</dbReference>
<dbReference type="EMBL" id="AY065396">
    <property type="protein sequence ID" value="AAL38837.1"/>
    <property type="molecule type" value="mRNA"/>
</dbReference>
<dbReference type="EMBL" id="AY096729">
    <property type="protein sequence ID" value="AAM20363.1"/>
    <property type="molecule type" value="mRNA"/>
</dbReference>
<dbReference type="RefSeq" id="NP_566872.1">
    <molecule id="Q9FVE6-1"/>
    <property type="nucleotide sequence ID" value="NM_114344.4"/>
</dbReference>
<dbReference type="PDB" id="7VRR">
    <property type="method" value="X-ray"/>
    <property type="resolution" value="2.95 A"/>
    <property type="chains" value="A/B/C/D/E=1-96"/>
</dbReference>
<dbReference type="PDBsum" id="7VRR"/>
<dbReference type="SMR" id="Q9FVE6"/>
<dbReference type="BioGRID" id="8925">
    <property type="interactions" value="3"/>
</dbReference>
<dbReference type="FunCoup" id="Q9FVE6">
    <property type="interactions" value="255"/>
</dbReference>
<dbReference type="IntAct" id="Q9FVE6">
    <property type="interactions" value="3"/>
</dbReference>
<dbReference type="STRING" id="3702.Q9FVE6"/>
<dbReference type="GlyGen" id="Q9FVE6">
    <property type="glycosylation" value="1 site"/>
</dbReference>
<dbReference type="iPTMnet" id="Q9FVE6"/>
<dbReference type="PaxDb" id="3702-AT3G44750.1"/>
<dbReference type="ProteomicsDB" id="230300">
    <molecule id="Q9FVE6-1"/>
</dbReference>
<dbReference type="EnsemblPlants" id="AT3G44750.1">
    <molecule id="Q9FVE6-1"/>
    <property type="protein sequence ID" value="AT3G44750.1"/>
    <property type="gene ID" value="AT3G44750"/>
</dbReference>
<dbReference type="GeneID" id="823605"/>
<dbReference type="Gramene" id="AT3G44750.1">
    <molecule id="Q9FVE6-1"/>
    <property type="protein sequence ID" value="AT3G44750.1"/>
    <property type="gene ID" value="AT3G44750"/>
</dbReference>
<dbReference type="KEGG" id="ath:AT3G44750"/>
<dbReference type="Araport" id="AT3G44750"/>
<dbReference type="TAIR" id="AT3G44750">
    <property type="gene designation" value="HDA3"/>
</dbReference>
<dbReference type="eggNOG" id="ENOG502QVH6">
    <property type="taxonomic scope" value="Eukaryota"/>
</dbReference>
<dbReference type="HOGENOM" id="CLU_061903_0_0_1"/>
<dbReference type="InParanoid" id="Q9FVE6"/>
<dbReference type="OMA" id="HFCGYQT"/>
<dbReference type="OrthoDB" id="2019803at2759"/>
<dbReference type="PhylomeDB" id="Q9FVE6"/>
<dbReference type="BRENDA" id="3.5.1.98">
    <property type="organism ID" value="399"/>
</dbReference>
<dbReference type="CD-CODE" id="4299E36E">
    <property type="entry name" value="Nucleolus"/>
</dbReference>
<dbReference type="PRO" id="PR:Q9FVE6"/>
<dbReference type="Proteomes" id="UP000006548">
    <property type="component" value="Chromosome 3"/>
</dbReference>
<dbReference type="ExpressionAtlas" id="Q9FVE6">
    <property type="expression patterns" value="baseline and differential"/>
</dbReference>
<dbReference type="GO" id="GO:0005730">
    <property type="term" value="C:nucleolus"/>
    <property type="evidence" value="ECO:0007005"/>
    <property type="project" value="TAIR"/>
</dbReference>
<dbReference type="GO" id="GO:0004407">
    <property type="term" value="F:histone deacetylase activity"/>
    <property type="evidence" value="ECO:0000315"/>
    <property type="project" value="TAIR"/>
</dbReference>
<dbReference type="GO" id="GO:0016787">
    <property type="term" value="F:hydrolase activity"/>
    <property type="evidence" value="ECO:0007669"/>
    <property type="project" value="UniProtKB-KW"/>
</dbReference>
<dbReference type="GO" id="GO:0008270">
    <property type="term" value="F:zinc ion binding"/>
    <property type="evidence" value="ECO:0007669"/>
    <property type="project" value="UniProtKB-KW"/>
</dbReference>
<dbReference type="GO" id="GO:0006325">
    <property type="term" value="P:chromatin organization"/>
    <property type="evidence" value="ECO:0007669"/>
    <property type="project" value="UniProtKB-KW"/>
</dbReference>
<dbReference type="GO" id="GO:0009294">
    <property type="term" value="P:DNA-mediated transformation"/>
    <property type="evidence" value="ECO:0000315"/>
    <property type="project" value="TAIR"/>
</dbReference>
<dbReference type="GO" id="GO:0009944">
    <property type="term" value="P:polarity specification of adaxial/abaxial axis"/>
    <property type="evidence" value="ECO:0000315"/>
    <property type="project" value="TAIR"/>
</dbReference>
<dbReference type="GO" id="GO:0048364">
    <property type="term" value="P:root development"/>
    <property type="evidence" value="ECO:0000315"/>
    <property type="project" value="TAIR"/>
</dbReference>
<dbReference type="GO" id="GO:0010162">
    <property type="term" value="P:seed dormancy process"/>
    <property type="evidence" value="ECO:0000270"/>
    <property type="project" value="TAIR"/>
</dbReference>
<dbReference type="FunFam" id="2.60.120.340:FF:000004">
    <property type="entry name" value="Histone deacetylase HDT1"/>
    <property type="match status" value="1"/>
</dbReference>
<dbReference type="Gene3D" id="2.60.120.340">
    <property type="entry name" value="Nucleoplasmin core domain"/>
    <property type="match status" value="1"/>
</dbReference>
<dbReference type="InterPro" id="IPR041232">
    <property type="entry name" value="NPL"/>
</dbReference>
<dbReference type="InterPro" id="IPR013087">
    <property type="entry name" value="Znf_C2H2_type"/>
</dbReference>
<dbReference type="Pfam" id="PF17800">
    <property type="entry name" value="NPL"/>
    <property type="match status" value="1"/>
</dbReference>
<dbReference type="PROSITE" id="PS00028">
    <property type="entry name" value="ZINC_FINGER_C2H2_1"/>
    <property type="match status" value="1"/>
</dbReference>
<dbReference type="PROSITE" id="PS50157">
    <property type="entry name" value="ZINC_FINGER_C2H2_2"/>
    <property type="match status" value="1"/>
</dbReference>
<reference key="1">
    <citation type="journal article" date="2000" name="Plant J.">
        <title>Functional analysis of HD2 histone deacetylase homologues in Arabidopsis thaliana.</title>
        <authorList>
            <person name="Wu K."/>
            <person name="Tian L."/>
            <person name="Malik K."/>
            <person name="Brown D."/>
            <person name="Miki B."/>
        </authorList>
    </citation>
    <scope>NUCLEOTIDE SEQUENCE [MRNA]</scope>
    <scope>FUNCTION</scope>
    <scope>TISSUE SPECIFICITY</scope>
    <source>
        <strain>cv. Columbia</strain>
    </source>
</reference>
<reference key="2">
    <citation type="journal article" date="2000" name="Nature">
        <title>Sequence and analysis of chromosome 3 of the plant Arabidopsis thaliana.</title>
        <authorList>
            <person name="Salanoubat M."/>
            <person name="Lemcke K."/>
            <person name="Rieger M."/>
            <person name="Ansorge W."/>
            <person name="Unseld M."/>
            <person name="Fartmann B."/>
            <person name="Valle G."/>
            <person name="Bloecker H."/>
            <person name="Perez-Alonso M."/>
            <person name="Obermaier B."/>
            <person name="Delseny M."/>
            <person name="Boutry M."/>
            <person name="Grivell L.A."/>
            <person name="Mache R."/>
            <person name="Puigdomenech P."/>
            <person name="De Simone V."/>
            <person name="Choisne N."/>
            <person name="Artiguenave F."/>
            <person name="Robert C."/>
            <person name="Brottier P."/>
            <person name="Wincker P."/>
            <person name="Cattolico L."/>
            <person name="Weissenbach J."/>
            <person name="Saurin W."/>
            <person name="Quetier F."/>
            <person name="Schaefer M."/>
            <person name="Mueller-Auer S."/>
            <person name="Gabel C."/>
            <person name="Fuchs M."/>
            <person name="Benes V."/>
            <person name="Wurmbach E."/>
            <person name="Drzonek H."/>
            <person name="Erfle H."/>
            <person name="Jordan N."/>
            <person name="Bangert S."/>
            <person name="Wiedelmann R."/>
            <person name="Kranz H."/>
            <person name="Voss H."/>
            <person name="Holland R."/>
            <person name="Brandt P."/>
            <person name="Nyakatura G."/>
            <person name="Vezzi A."/>
            <person name="D'Angelo M."/>
            <person name="Pallavicini A."/>
            <person name="Toppo S."/>
            <person name="Simionati B."/>
            <person name="Conrad A."/>
            <person name="Hornischer K."/>
            <person name="Kauer G."/>
            <person name="Loehnert T.-H."/>
            <person name="Nordsiek G."/>
            <person name="Reichelt J."/>
            <person name="Scharfe M."/>
            <person name="Schoen O."/>
            <person name="Bargues M."/>
            <person name="Terol J."/>
            <person name="Climent J."/>
            <person name="Navarro P."/>
            <person name="Collado C."/>
            <person name="Perez-Perez A."/>
            <person name="Ottenwaelder B."/>
            <person name="Duchemin D."/>
            <person name="Cooke R."/>
            <person name="Laudie M."/>
            <person name="Berger-Llauro C."/>
            <person name="Purnelle B."/>
            <person name="Masuy D."/>
            <person name="de Haan M."/>
            <person name="Maarse A.C."/>
            <person name="Alcaraz J.-P."/>
            <person name="Cottet A."/>
            <person name="Casacuberta E."/>
            <person name="Monfort A."/>
            <person name="Argiriou A."/>
            <person name="Flores M."/>
            <person name="Liguori R."/>
            <person name="Vitale D."/>
            <person name="Mannhaupt G."/>
            <person name="Haase D."/>
            <person name="Schoof H."/>
            <person name="Rudd S."/>
            <person name="Zaccaria P."/>
            <person name="Mewes H.-W."/>
            <person name="Mayer K.F.X."/>
            <person name="Kaul S."/>
            <person name="Town C.D."/>
            <person name="Koo H.L."/>
            <person name="Tallon L.J."/>
            <person name="Jenkins J."/>
            <person name="Rooney T."/>
            <person name="Rizzo M."/>
            <person name="Walts A."/>
            <person name="Utterback T."/>
            <person name="Fujii C.Y."/>
            <person name="Shea T.P."/>
            <person name="Creasy T.H."/>
            <person name="Haas B."/>
            <person name="Maiti R."/>
            <person name="Wu D."/>
            <person name="Peterson J."/>
            <person name="Van Aken S."/>
            <person name="Pai G."/>
            <person name="Militscher J."/>
            <person name="Sellers P."/>
            <person name="Gill J.E."/>
            <person name="Feldblyum T.V."/>
            <person name="Preuss D."/>
            <person name="Lin X."/>
            <person name="Nierman W.C."/>
            <person name="Salzberg S.L."/>
            <person name="White O."/>
            <person name="Venter J.C."/>
            <person name="Fraser C.M."/>
            <person name="Kaneko T."/>
            <person name="Nakamura Y."/>
            <person name="Sato S."/>
            <person name="Kato T."/>
            <person name="Asamizu E."/>
            <person name="Sasamoto S."/>
            <person name="Kimura T."/>
            <person name="Idesawa K."/>
            <person name="Kawashima K."/>
            <person name="Kishida Y."/>
            <person name="Kiyokawa C."/>
            <person name="Kohara M."/>
            <person name="Matsumoto M."/>
            <person name="Matsuno A."/>
            <person name="Muraki A."/>
            <person name="Nakayama S."/>
            <person name="Nakazaki N."/>
            <person name="Shinpo S."/>
            <person name="Takeuchi C."/>
            <person name="Wada T."/>
            <person name="Watanabe A."/>
            <person name="Yamada M."/>
            <person name="Yasuda M."/>
            <person name="Tabata S."/>
        </authorList>
    </citation>
    <scope>NUCLEOTIDE SEQUENCE [LARGE SCALE GENOMIC DNA]</scope>
    <source>
        <strain>cv. Columbia</strain>
    </source>
</reference>
<reference key="3">
    <citation type="journal article" date="2017" name="Plant J.">
        <title>Araport11: a complete reannotation of the Arabidopsis thaliana reference genome.</title>
        <authorList>
            <person name="Cheng C.Y."/>
            <person name="Krishnakumar V."/>
            <person name="Chan A.P."/>
            <person name="Thibaud-Nissen F."/>
            <person name="Schobel S."/>
            <person name="Town C.D."/>
        </authorList>
    </citation>
    <scope>GENOME REANNOTATION</scope>
    <source>
        <strain>cv. Columbia</strain>
    </source>
</reference>
<reference key="4">
    <citation type="journal article" date="2003" name="Science">
        <title>Empirical analysis of transcriptional activity in the Arabidopsis genome.</title>
        <authorList>
            <person name="Yamada K."/>
            <person name="Lim J."/>
            <person name="Dale J.M."/>
            <person name="Chen H."/>
            <person name="Shinn P."/>
            <person name="Palm C.J."/>
            <person name="Southwick A.M."/>
            <person name="Wu H.C."/>
            <person name="Kim C.J."/>
            <person name="Nguyen M."/>
            <person name="Pham P.K."/>
            <person name="Cheuk R.F."/>
            <person name="Karlin-Newmann G."/>
            <person name="Liu S.X."/>
            <person name="Lam B."/>
            <person name="Sakano H."/>
            <person name="Wu T."/>
            <person name="Yu G."/>
            <person name="Miranda M."/>
            <person name="Quach H.L."/>
            <person name="Tripp M."/>
            <person name="Chang C.H."/>
            <person name="Lee J.M."/>
            <person name="Toriumi M.J."/>
            <person name="Chan M.M."/>
            <person name="Tang C.C."/>
            <person name="Onodera C.S."/>
            <person name="Deng J.M."/>
            <person name="Akiyama K."/>
            <person name="Ansari Y."/>
            <person name="Arakawa T."/>
            <person name="Banh J."/>
            <person name="Banno F."/>
            <person name="Bowser L."/>
            <person name="Brooks S.Y."/>
            <person name="Carninci P."/>
            <person name="Chao Q."/>
            <person name="Choy N."/>
            <person name="Enju A."/>
            <person name="Goldsmith A.D."/>
            <person name="Gurjal M."/>
            <person name="Hansen N.F."/>
            <person name="Hayashizaki Y."/>
            <person name="Johnson-Hopson C."/>
            <person name="Hsuan V.W."/>
            <person name="Iida K."/>
            <person name="Karnes M."/>
            <person name="Khan S."/>
            <person name="Koesema E."/>
            <person name="Ishida J."/>
            <person name="Jiang P.X."/>
            <person name="Jones T."/>
            <person name="Kawai J."/>
            <person name="Kamiya A."/>
            <person name="Meyers C."/>
            <person name="Nakajima M."/>
            <person name="Narusaka M."/>
            <person name="Seki M."/>
            <person name="Sakurai T."/>
            <person name="Satou M."/>
            <person name="Tamse R."/>
            <person name="Vaysberg M."/>
            <person name="Wallender E.K."/>
            <person name="Wong C."/>
            <person name="Yamamura Y."/>
            <person name="Yuan S."/>
            <person name="Shinozaki K."/>
            <person name="Davis R.W."/>
            <person name="Theologis A."/>
            <person name="Ecker J.R."/>
        </authorList>
    </citation>
    <scope>NUCLEOTIDE SEQUENCE [LARGE SCALE MRNA]</scope>
    <source>
        <strain>cv. Columbia</strain>
    </source>
</reference>
<reference key="5">
    <citation type="journal article" date="2002" name="Nucleic Acids Res.">
        <title>Analysis of histone acetyltransferase and histone deacetylase families of Arabidopsis thaliana suggests functional diversification of chromatin modification among multicellular eukaryotes.</title>
        <authorList>
            <person name="Pandey R."/>
            <person name="Mueller A."/>
            <person name="Napoli C.A."/>
            <person name="Selinger D.A."/>
            <person name="Pikaard C.S."/>
            <person name="Richards E.J."/>
            <person name="Bender J."/>
            <person name="Mount D.W."/>
            <person name="Jorgensen R.A."/>
        </authorList>
    </citation>
    <scope>GENE FAMILY</scope>
    <scope>NOMENCLATURE</scope>
</reference>
<reference key="6">
    <citation type="journal article" date="2003" name="J. Cell. Biochem.">
        <title>A proteomic study of the Arabidopsis nuclear matrix.</title>
        <authorList>
            <person name="Calikowski T.T."/>
            <person name="Meulia T."/>
            <person name="Meier I."/>
        </authorList>
    </citation>
    <scope>SUBCELLULAR LOCATION</scope>
</reference>
<reference key="7">
    <citation type="journal article" date="2003" name="Plant J.">
        <title>Repression of gene expression by Arabidopsis HD2 histone deacetylases.</title>
        <authorList>
            <person name="Wu K."/>
            <person name="Tian L."/>
            <person name="Zhou C."/>
            <person name="Brown D."/>
            <person name="Miki B."/>
        </authorList>
    </citation>
    <scope>FUNCTION</scope>
</reference>
<reference key="8">
    <citation type="journal article" date="2004" name="Mol. Cell">
        <title>A concerted DNA methylation/histone methylation switch regulates rRNA gene dosage control and nucleolar dominance.</title>
        <authorList>
            <person name="Lawrence R.J."/>
            <person name="Earley K."/>
            <person name="Pontes O."/>
            <person name="Silva M."/>
            <person name="Chen Z.J."/>
            <person name="Neves N."/>
            <person name="Viegas W."/>
            <person name="Pikaard C.S."/>
        </authorList>
    </citation>
    <scope>FUNCTION</scope>
    <scope>SUBCELLULAR LOCATION</scope>
</reference>
<reference key="9">
    <citation type="journal article" date="2004" name="Plant J.">
        <title>Expression and function of HD2-type histone deacetylases in Arabidopsis development.</title>
        <authorList>
            <person name="Zhou C."/>
            <person name="Labbe H."/>
            <person name="Sridha S."/>
            <person name="Wang L."/>
            <person name="Tian L."/>
            <person name="Latoszek-Green M."/>
            <person name="Yang Z."/>
            <person name="Brown D."/>
            <person name="Miki B."/>
            <person name="Wu K."/>
        </authorList>
    </citation>
    <scope>FUNCTION</scope>
    <scope>TISSUE SPECIFICITY</scope>
    <scope>SUBCELLULAR LOCATION</scope>
    <scope>MUTAGENESIS OF 2-GLU--GLY-5; HIS-25 AND ASP-69</scope>
</reference>
<reference key="10">
    <citation type="journal article" date="2009" name="J. Proteomics">
        <title>Phosphoproteomic analysis of nuclei-enriched fractions from Arabidopsis thaliana.</title>
        <authorList>
            <person name="Jones A.M.E."/>
            <person name="MacLean D."/>
            <person name="Studholme D.J."/>
            <person name="Serna-Sanz A."/>
            <person name="Andreasson E."/>
            <person name="Rathjen J.P."/>
            <person name="Peck S.C."/>
        </authorList>
    </citation>
    <scope>IDENTIFICATION BY MASS SPECTROMETRY [LARGE SCALE ANALYSIS]</scope>
    <source>
        <strain>cv. Columbia</strain>
    </source>
</reference>
<reference key="11">
    <citation type="journal article" date="2009" name="Plant Physiol.">
        <title>Large-scale Arabidopsis phosphoproteome profiling reveals novel chloroplast kinase substrates and phosphorylation networks.</title>
        <authorList>
            <person name="Reiland S."/>
            <person name="Messerli G."/>
            <person name="Baerenfaller K."/>
            <person name="Gerrits B."/>
            <person name="Endler A."/>
            <person name="Grossmann J."/>
            <person name="Gruissem W."/>
            <person name="Baginsky S."/>
        </authorList>
    </citation>
    <scope>IDENTIFICATION BY MASS SPECTROMETRY [LARGE SCALE ANALYSIS]</scope>
</reference>
<reference key="12">
    <citation type="journal article" date="2010" name="Biochem. Biophys. Res. Commun.">
        <title>Arabidopsis DNA methyltransferase AtDNMT2 associates with histone deacetylase AtHD2s activity.</title>
        <authorList>
            <person name="Song Y."/>
            <person name="Wu K."/>
            <person name="Dhaubhadel S."/>
            <person name="An L."/>
            <person name="Tian L."/>
        </authorList>
    </citation>
    <scope>INTERACTION WITH DNMT2</scope>
    <source>
        <strain>cv. Columbia</strain>
    </source>
</reference>
<reference key="13">
    <citation type="journal article" date="2012" name="Mol. Cell. Proteomics">
        <title>Comparative large-scale characterisation of plant vs. mammal proteins reveals similar and idiosyncratic N-alpha acetylation features.</title>
        <authorList>
            <person name="Bienvenut W.V."/>
            <person name="Sumpton D."/>
            <person name="Martinez A."/>
            <person name="Lilla S."/>
            <person name="Espagne C."/>
            <person name="Meinnel T."/>
            <person name="Giglione C."/>
        </authorList>
    </citation>
    <scope>ACETYLATION [LARGE SCALE ANALYSIS] AT MET-1</scope>
    <scope>IDENTIFICATION BY MASS SPECTROMETRY [LARGE SCALE ANALYSIS]</scope>
</reference>
<reference key="14">
    <citation type="journal article" date="2014" name="Plant Cell">
        <title>A DEK domain-containing protein modulates chromatin structure and function in Arabidopsis.</title>
        <authorList>
            <person name="Waidmann S."/>
            <person name="Kusenda B."/>
            <person name="Mayerhofer J."/>
            <person name="Mechtler K."/>
            <person name="Jonak C."/>
        </authorList>
    </citation>
    <scope>INTERACTION WITH DEK3</scope>
    <scope>IDENTIFICATION BY MASS SPECTROMETRY</scope>
    <source>
        <strain>cv. Columbia</strain>
    </source>
</reference>
<gene>
    <name evidence="12" type="primary">HDT1</name>
    <name evidence="11 13" type="synonym">HD2A</name>
    <name type="synonym">HDA3</name>
    <name evidence="15" type="ordered locus">At3g44750</name>
    <name evidence="16" type="ORF">T32N15.8</name>
</gene>